<keyword id="KW-0414">Isoprene biosynthesis</keyword>
<keyword id="KW-0456">Lyase</keyword>
<keyword id="KW-0479">Metal-binding</keyword>
<organism>
    <name type="scientific">Anaplasma marginale (strain St. Maries)</name>
    <dbReference type="NCBI Taxonomy" id="234826"/>
    <lineage>
        <taxon>Bacteria</taxon>
        <taxon>Pseudomonadati</taxon>
        <taxon>Pseudomonadota</taxon>
        <taxon>Alphaproteobacteria</taxon>
        <taxon>Rickettsiales</taxon>
        <taxon>Anaplasmataceae</taxon>
        <taxon>Anaplasma</taxon>
    </lineage>
</organism>
<dbReference type="EC" id="4.6.1.12" evidence="1"/>
<dbReference type="EMBL" id="CP000030">
    <property type="protein sequence ID" value="AAV87137.1"/>
    <property type="status" value="ALT_INIT"/>
    <property type="molecule type" value="Genomic_DNA"/>
</dbReference>
<dbReference type="SMR" id="Q5P993"/>
<dbReference type="KEGG" id="ama:AM1356"/>
<dbReference type="HOGENOM" id="CLU_084630_2_0_5"/>
<dbReference type="UniPathway" id="UPA00056">
    <property type="reaction ID" value="UER00095"/>
</dbReference>
<dbReference type="GO" id="GO:0008685">
    <property type="term" value="F:2-C-methyl-D-erythritol 2,4-cyclodiphosphate synthase activity"/>
    <property type="evidence" value="ECO:0007669"/>
    <property type="project" value="UniProtKB-UniRule"/>
</dbReference>
<dbReference type="GO" id="GO:0046872">
    <property type="term" value="F:metal ion binding"/>
    <property type="evidence" value="ECO:0007669"/>
    <property type="project" value="UniProtKB-KW"/>
</dbReference>
<dbReference type="GO" id="GO:0019288">
    <property type="term" value="P:isopentenyl diphosphate biosynthetic process, methylerythritol 4-phosphate pathway"/>
    <property type="evidence" value="ECO:0007669"/>
    <property type="project" value="UniProtKB-UniRule"/>
</dbReference>
<dbReference type="GO" id="GO:0016114">
    <property type="term" value="P:terpenoid biosynthetic process"/>
    <property type="evidence" value="ECO:0007669"/>
    <property type="project" value="InterPro"/>
</dbReference>
<dbReference type="CDD" id="cd00554">
    <property type="entry name" value="MECDP_synthase"/>
    <property type="match status" value="1"/>
</dbReference>
<dbReference type="Gene3D" id="3.30.1330.50">
    <property type="entry name" value="2-C-methyl-D-erythritol 2,4-cyclodiphosphate synthase"/>
    <property type="match status" value="1"/>
</dbReference>
<dbReference type="HAMAP" id="MF_00107">
    <property type="entry name" value="IspF"/>
    <property type="match status" value="1"/>
</dbReference>
<dbReference type="InterPro" id="IPR003526">
    <property type="entry name" value="MECDP_synthase"/>
</dbReference>
<dbReference type="InterPro" id="IPR020555">
    <property type="entry name" value="MECDP_synthase_CS"/>
</dbReference>
<dbReference type="InterPro" id="IPR036571">
    <property type="entry name" value="MECDP_synthase_sf"/>
</dbReference>
<dbReference type="NCBIfam" id="TIGR00151">
    <property type="entry name" value="ispF"/>
    <property type="match status" value="1"/>
</dbReference>
<dbReference type="PANTHER" id="PTHR43181">
    <property type="entry name" value="2-C-METHYL-D-ERYTHRITOL 2,4-CYCLODIPHOSPHATE SYNTHASE, CHLOROPLASTIC"/>
    <property type="match status" value="1"/>
</dbReference>
<dbReference type="PANTHER" id="PTHR43181:SF1">
    <property type="entry name" value="2-C-METHYL-D-ERYTHRITOL 2,4-CYCLODIPHOSPHATE SYNTHASE, CHLOROPLASTIC"/>
    <property type="match status" value="1"/>
</dbReference>
<dbReference type="Pfam" id="PF02542">
    <property type="entry name" value="YgbB"/>
    <property type="match status" value="1"/>
</dbReference>
<dbReference type="SUPFAM" id="SSF69765">
    <property type="entry name" value="IpsF-like"/>
    <property type="match status" value="1"/>
</dbReference>
<dbReference type="PROSITE" id="PS01350">
    <property type="entry name" value="ISPF"/>
    <property type="match status" value="1"/>
</dbReference>
<name>ISPF_ANAMM</name>
<sequence>MITAVRAVPFRVGIGYDVHGFADSPPENGHIVLCGVEIAFHRKIKAHSDGDVGTHALVDALLGCVGEGSIGEHFPNTDPRWENMSSTHFLLEAQSKALAKGYAVLNFDLTIVCELPKIIPHVPKMKLFMSKLLGMDASAINIKAVTTEKLGFIGRGEGIAAHAVVLCRKVTAAAPNPGSENPRG</sequence>
<accession>Q5P993</accession>
<protein>
    <recommendedName>
        <fullName evidence="1">2-C-methyl-D-erythritol 2,4-cyclodiphosphate synthase</fullName>
        <shortName evidence="1">MECDP-synthase</shortName>
        <shortName evidence="1">MECPP-synthase</shortName>
        <shortName evidence="1">MECPS</shortName>
        <ecNumber evidence="1">4.6.1.12</ecNumber>
    </recommendedName>
</protein>
<gene>
    <name evidence="1" type="primary">ispF</name>
    <name type="ordered locus">AM1356</name>
</gene>
<feature type="chain" id="PRO_0000237703" description="2-C-methyl-D-erythritol 2,4-cyclodiphosphate synthase">
    <location>
        <begin position="1"/>
        <end position="184"/>
    </location>
</feature>
<feature type="binding site" evidence="1">
    <location>
        <begin position="17"/>
        <end position="19"/>
    </location>
    <ligand>
        <name>4-CDP-2-C-methyl-D-erythritol 2-phosphate</name>
        <dbReference type="ChEBI" id="CHEBI:57919"/>
    </ligand>
</feature>
<feature type="binding site" evidence="1">
    <location>
        <position position="17"/>
    </location>
    <ligand>
        <name>a divalent metal cation</name>
        <dbReference type="ChEBI" id="CHEBI:60240"/>
    </ligand>
</feature>
<feature type="binding site" evidence="1">
    <location>
        <position position="19"/>
    </location>
    <ligand>
        <name>a divalent metal cation</name>
        <dbReference type="ChEBI" id="CHEBI:60240"/>
    </ligand>
</feature>
<feature type="binding site" evidence="1">
    <location>
        <begin position="47"/>
        <end position="48"/>
    </location>
    <ligand>
        <name>4-CDP-2-C-methyl-D-erythritol 2-phosphate</name>
        <dbReference type="ChEBI" id="CHEBI:57919"/>
    </ligand>
</feature>
<feature type="binding site" evidence="1">
    <location>
        <position position="55"/>
    </location>
    <ligand>
        <name>a divalent metal cation</name>
        <dbReference type="ChEBI" id="CHEBI:60240"/>
    </ligand>
</feature>
<feature type="binding site" evidence="1">
    <location>
        <begin position="74"/>
        <end position="78"/>
    </location>
    <ligand>
        <name>4-CDP-2-C-methyl-D-erythritol 2-phosphate</name>
        <dbReference type="ChEBI" id="CHEBI:57919"/>
    </ligand>
</feature>
<feature type="binding site" evidence="1">
    <location>
        <position position="152"/>
    </location>
    <ligand>
        <name>4-CDP-2-C-methyl-D-erythritol 2-phosphate</name>
        <dbReference type="ChEBI" id="CHEBI:57919"/>
    </ligand>
</feature>
<feature type="binding site" evidence="1">
    <location>
        <position position="155"/>
    </location>
    <ligand>
        <name>4-CDP-2-C-methyl-D-erythritol 2-phosphate</name>
        <dbReference type="ChEBI" id="CHEBI:57919"/>
    </ligand>
</feature>
<feature type="site" description="Transition state stabilizer" evidence="1">
    <location>
        <position position="47"/>
    </location>
</feature>
<feature type="site" description="Transition state stabilizer" evidence="1">
    <location>
        <position position="146"/>
    </location>
</feature>
<proteinExistence type="inferred from homology"/>
<evidence type="ECO:0000255" key="1">
    <source>
        <dbReference type="HAMAP-Rule" id="MF_00107"/>
    </source>
</evidence>
<evidence type="ECO:0000305" key="2"/>
<comment type="function">
    <text evidence="1">Involved in the biosynthesis of isopentenyl diphosphate (IPP) and dimethylallyl diphosphate (DMAPP), two major building blocks of isoprenoid compounds. Catalyzes the conversion of 4-diphosphocytidyl-2-C-methyl-D-erythritol 2-phosphate (CDP-ME2P) to 2-C-methyl-D-erythritol 2,4-cyclodiphosphate (ME-CPP) with a corresponding release of cytidine 5-monophosphate (CMP).</text>
</comment>
<comment type="catalytic activity">
    <reaction evidence="1">
        <text>4-CDP-2-C-methyl-D-erythritol 2-phosphate = 2-C-methyl-D-erythritol 2,4-cyclic diphosphate + CMP</text>
        <dbReference type="Rhea" id="RHEA:23864"/>
        <dbReference type="ChEBI" id="CHEBI:57919"/>
        <dbReference type="ChEBI" id="CHEBI:58483"/>
        <dbReference type="ChEBI" id="CHEBI:60377"/>
        <dbReference type="EC" id="4.6.1.12"/>
    </reaction>
</comment>
<comment type="cofactor">
    <cofactor evidence="1">
        <name>a divalent metal cation</name>
        <dbReference type="ChEBI" id="CHEBI:60240"/>
    </cofactor>
    <text evidence="1">Binds 1 divalent metal cation per subunit.</text>
</comment>
<comment type="pathway">
    <text evidence="1">Isoprenoid biosynthesis; isopentenyl diphosphate biosynthesis via DXP pathway; isopentenyl diphosphate from 1-deoxy-D-xylulose 5-phosphate: step 4/6.</text>
</comment>
<comment type="subunit">
    <text evidence="1">Homotrimer.</text>
</comment>
<comment type="similarity">
    <text evidence="1">Belongs to the IspF family.</text>
</comment>
<comment type="sequence caution" evidence="2">
    <conflict type="erroneous initiation">
        <sequence resource="EMBL-CDS" id="AAV87137"/>
    </conflict>
    <text>Extended N-terminus.</text>
</comment>
<reference key="1">
    <citation type="journal article" date="2005" name="Proc. Natl. Acad. Sci. U.S.A.">
        <title>Complete genome sequencing of Anaplasma marginale reveals that the surface is skewed to two superfamilies of outer membrane proteins.</title>
        <authorList>
            <person name="Brayton K.A."/>
            <person name="Kappmeyer L.S."/>
            <person name="Herndon D.R."/>
            <person name="Dark M.J."/>
            <person name="Tibbals D.L."/>
            <person name="Palmer G.H."/>
            <person name="McGuire T.C."/>
            <person name="Knowles D.P. Jr."/>
        </authorList>
    </citation>
    <scope>NUCLEOTIDE SEQUENCE [LARGE SCALE GENOMIC DNA]</scope>
    <source>
        <strain>St. Maries</strain>
    </source>
</reference>